<protein>
    <recommendedName>
        <fullName evidence="1">Phosphoserine aminotransferase</fullName>
        <ecNumber evidence="1">2.6.1.52</ecNumber>
    </recommendedName>
    <alternativeName>
        <fullName evidence="1">Phosphohydroxythreonine aminotransferase</fullName>
        <shortName evidence="1">PSAT</shortName>
    </alternativeName>
</protein>
<dbReference type="EC" id="2.6.1.52" evidence="1"/>
<dbReference type="EMBL" id="AE005674">
    <property type="protein sequence ID" value="AAN42532.1"/>
    <property type="molecule type" value="Genomic_DNA"/>
</dbReference>
<dbReference type="EMBL" id="AE014073">
    <property type="protein sequence ID" value="AAP16418.1"/>
    <property type="molecule type" value="Genomic_DNA"/>
</dbReference>
<dbReference type="RefSeq" id="NP_706825.1">
    <property type="nucleotide sequence ID" value="NC_004337.2"/>
</dbReference>
<dbReference type="RefSeq" id="WP_000057149.1">
    <property type="nucleotide sequence ID" value="NZ_WPGW01000196.1"/>
</dbReference>
<dbReference type="SMR" id="Q83LP3"/>
<dbReference type="STRING" id="198214.SF0902"/>
<dbReference type="PaxDb" id="198214-SF0902"/>
<dbReference type="GeneID" id="1023863"/>
<dbReference type="GeneID" id="93776511"/>
<dbReference type="KEGG" id="sfl:SF0902"/>
<dbReference type="KEGG" id="sfx:S0966"/>
<dbReference type="PATRIC" id="fig|198214.7.peg.1051"/>
<dbReference type="HOGENOM" id="CLU_034866_0_2_6"/>
<dbReference type="UniPathway" id="UPA00135">
    <property type="reaction ID" value="UER00197"/>
</dbReference>
<dbReference type="UniPathway" id="UPA00244">
    <property type="reaction ID" value="UER00311"/>
</dbReference>
<dbReference type="Proteomes" id="UP000001006">
    <property type="component" value="Chromosome"/>
</dbReference>
<dbReference type="Proteomes" id="UP000002673">
    <property type="component" value="Chromosome"/>
</dbReference>
<dbReference type="GO" id="GO:0005737">
    <property type="term" value="C:cytoplasm"/>
    <property type="evidence" value="ECO:0007669"/>
    <property type="project" value="UniProtKB-SubCell"/>
</dbReference>
<dbReference type="GO" id="GO:0004648">
    <property type="term" value="F:O-phospho-L-serine:2-oxoglutarate aminotransferase activity"/>
    <property type="evidence" value="ECO:0007669"/>
    <property type="project" value="UniProtKB-UniRule"/>
</dbReference>
<dbReference type="GO" id="GO:0030170">
    <property type="term" value="F:pyridoxal phosphate binding"/>
    <property type="evidence" value="ECO:0007669"/>
    <property type="project" value="UniProtKB-UniRule"/>
</dbReference>
<dbReference type="GO" id="GO:0006564">
    <property type="term" value="P:L-serine biosynthetic process"/>
    <property type="evidence" value="ECO:0007669"/>
    <property type="project" value="UniProtKB-UniRule"/>
</dbReference>
<dbReference type="GO" id="GO:0008615">
    <property type="term" value="P:pyridoxine biosynthetic process"/>
    <property type="evidence" value="ECO:0007669"/>
    <property type="project" value="UniProtKB-UniRule"/>
</dbReference>
<dbReference type="CDD" id="cd00611">
    <property type="entry name" value="PSAT_like"/>
    <property type="match status" value="1"/>
</dbReference>
<dbReference type="FunFam" id="3.40.640.10:FF:000010">
    <property type="entry name" value="Phosphoserine aminotransferase"/>
    <property type="match status" value="1"/>
</dbReference>
<dbReference type="FunFam" id="3.90.1150.10:FF:000006">
    <property type="entry name" value="Phosphoserine aminotransferase"/>
    <property type="match status" value="1"/>
</dbReference>
<dbReference type="Gene3D" id="3.90.1150.10">
    <property type="entry name" value="Aspartate Aminotransferase, domain 1"/>
    <property type="match status" value="1"/>
</dbReference>
<dbReference type="Gene3D" id="3.40.640.10">
    <property type="entry name" value="Type I PLP-dependent aspartate aminotransferase-like (Major domain)"/>
    <property type="match status" value="1"/>
</dbReference>
<dbReference type="HAMAP" id="MF_00160">
    <property type="entry name" value="SerC_aminotrans_5"/>
    <property type="match status" value="1"/>
</dbReference>
<dbReference type="InterPro" id="IPR000192">
    <property type="entry name" value="Aminotrans_V_dom"/>
</dbReference>
<dbReference type="InterPro" id="IPR020578">
    <property type="entry name" value="Aminotrans_V_PyrdxlP_BS"/>
</dbReference>
<dbReference type="InterPro" id="IPR022278">
    <property type="entry name" value="Pser_aminoTfrase"/>
</dbReference>
<dbReference type="InterPro" id="IPR015424">
    <property type="entry name" value="PyrdxlP-dep_Trfase"/>
</dbReference>
<dbReference type="InterPro" id="IPR015421">
    <property type="entry name" value="PyrdxlP-dep_Trfase_major"/>
</dbReference>
<dbReference type="InterPro" id="IPR015422">
    <property type="entry name" value="PyrdxlP-dep_Trfase_small"/>
</dbReference>
<dbReference type="NCBIfam" id="NF003764">
    <property type="entry name" value="PRK05355.1"/>
    <property type="match status" value="1"/>
</dbReference>
<dbReference type="NCBIfam" id="TIGR01364">
    <property type="entry name" value="serC_1"/>
    <property type="match status" value="1"/>
</dbReference>
<dbReference type="PANTHER" id="PTHR43247">
    <property type="entry name" value="PHOSPHOSERINE AMINOTRANSFERASE"/>
    <property type="match status" value="1"/>
</dbReference>
<dbReference type="PANTHER" id="PTHR43247:SF1">
    <property type="entry name" value="PHOSPHOSERINE AMINOTRANSFERASE"/>
    <property type="match status" value="1"/>
</dbReference>
<dbReference type="Pfam" id="PF00266">
    <property type="entry name" value="Aminotran_5"/>
    <property type="match status" value="1"/>
</dbReference>
<dbReference type="PIRSF" id="PIRSF000525">
    <property type="entry name" value="SerC"/>
    <property type="match status" value="1"/>
</dbReference>
<dbReference type="SUPFAM" id="SSF53383">
    <property type="entry name" value="PLP-dependent transferases"/>
    <property type="match status" value="1"/>
</dbReference>
<dbReference type="PROSITE" id="PS00595">
    <property type="entry name" value="AA_TRANSFER_CLASS_5"/>
    <property type="match status" value="1"/>
</dbReference>
<keyword id="KW-0028">Amino-acid biosynthesis</keyword>
<keyword id="KW-0032">Aminotransferase</keyword>
<keyword id="KW-0963">Cytoplasm</keyword>
<keyword id="KW-0663">Pyridoxal phosphate</keyword>
<keyword id="KW-0664">Pyridoxine biosynthesis</keyword>
<keyword id="KW-1185">Reference proteome</keyword>
<keyword id="KW-0718">Serine biosynthesis</keyword>
<keyword id="KW-0808">Transferase</keyword>
<organism>
    <name type="scientific">Shigella flexneri</name>
    <dbReference type="NCBI Taxonomy" id="623"/>
    <lineage>
        <taxon>Bacteria</taxon>
        <taxon>Pseudomonadati</taxon>
        <taxon>Pseudomonadota</taxon>
        <taxon>Gammaproteobacteria</taxon>
        <taxon>Enterobacterales</taxon>
        <taxon>Enterobacteriaceae</taxon>
        <taxon>Shigella</taxon>
    </lineage>
</organism>
<evidence type="ECO:0000255" key="1">
    <source>
        <dbReference type="HAMAP-Rule" id="MF_00160"/>
    </source>
</evidence>
<comment type="function">
    <text evidence="1">Catalyzes the reversible conversion of 3-phosphohydroxypyruvate to phosphoserine and of 3-hydroxy-2-oxo-4-phosphonooxybutanoate to phosphohydroxythreonine.</text>
</comment>
<comment type="catalytic activity">
    <reaction evidence="1">
        <text>O-phospho-L-serine + 2-oxoglutarate = 3-phosphooxypyruvate + L-glutamate</text>
        <dbReference type="Rhea" id="RHEA:14329"/>
        <dbReference type="ChEBI" id="CHEBI:16810"/>
        <dbReference type="ChEBI" id="CHEBI:18110"/>
        <dbReference type="ChEBI" id="CHEBI:29985"/>
        <dbReference type="ChEBI" id="CHEBI:57524"/>
        <dbReference type="EC" id="2.6.1.52"/>
    </reaction>
</comment>
<comment type="catalytic activity">
    <reaction evidence="1">
        <text>4-(phosphooxy)-L-threonine + 2-oxoglutarate = (R)-3-hydroxy-2-oxo-4-phosphooxybutanoate + L-glutamate</text>
        <dbReference type="Rhea" id="RHEA:16573"/>
        <dbReference type="ChEBI" id="CHEBI:16810"/>
        <dbReference type="ChEBI" id="CHEBI:29985"/>
        <dbReference type="ChEBI" id="CHEBI:58452"/>
        <dbReference type="ChEBI" id="CHEBI:58538"/>
        <dbReference type="EC" id="2.6.1.52"/>
    </reaction>
</comment>
<comment type="cofactor">
    <cofactor evidence="1">
        <name>pyridoxal 5'-phosphate</name>
        <dbReference type="ChEBI" id="CHEBI:597326"/>
    </cofactor>
    <text evidence="1">Binds 1 pyridoxal phosphate per subunit.</text>
</comment>
<comment type="pathway">
    <text evidence="1">Amino-acid biosynthesis; L-serine biosynthesis; L-serine from 3-phospho-D-glycerate: step 2/3.</text>
</comment>
<comment type="pathway">
    <text evidence="1">Cofactor biosynthesis; pyridoxine 5'-phosphate biosynthesis; pyridoxine 5'-phosphate from D-erythrose 4-phosphate: step 3/5.</text>
</comment>
<comment type="subunit">
    <text evidence="1">Homodimer.</text>
</comment>
<comment type="subcellular location">
    <subcellularLocation>
        <location evidence="1">Cytoplasm</location>
    </subcellularLocation>
</comment>
<comment type="similarity">
    <text evidence="1">Belongs to the class-V pyridoxal-phosphate-dependent aminotransferase family. SerC subfamily.</text>
</comment>
<gene>
    <name evidence="1" type="primary">serC</name>
    <name type="ordered locus">SF0902</name>
    <name type="ordered locus">S0966</name>
</gene>
<accession>Q83LP3</accession>
<feature type="chain" id="PRO_0000150209" description="Phosphoserine aminotransferase">
    <location>
        <begin position="1"/>
        <end position="362"/>
    </location>
</feature>
<feature type="binding site" evidence="1">
    <location>
        <position position="9"/>
    </location>
    <ligand>
        <name>L-glutamate</name>
        <dbReference type="ChEBI" id="CHEBI:29985"/>
    </ligand>
</feature>
<feature type="binding site" evidence="1">
    <location>
        <position position="42"/>
    </location>
    <ligand>
        <name>L-glutamate</name>
        <dbReference type="ChEBI" id="CHEBI:29985"/>
    </ligand>
</feature>
<feature type="binding site" evidence="1">
    <location>
        <begin position="76"/>
        <end position="77"/>
    </location>
    <ligand>
        <name>pyridoxal 5'-phosphate</name>
        <dbReference type="ChEBI" id="CHEBI:597326"/>
    </ligand>
</feature>
<feature type="binding site" evidence="1">
    <location>
        <position position="102"/>
    </location>
    <ligand>
        <name>pyridoxal 5'-phosphate</name>
        <dbReference type="ChEBI" id="CHEBI:597326"/>
    </ligand>
</feature>
<feature type="binding site" evidence="1">
    <location>
        <position position="153"/>
    </location>
    <ligand>
        <name>pyridoxal 5'-phosphate</name>
        <dbReference type="ChEBI" id="CHEBI:597326"/>
    </ligand>
</feature>
<feature type="binding site" evidence="1">
    <location>
        <position position="174"/>
    </location>
    <ligand>
        <name>pyridoxal 5'-phosphate</name>
        <dbReference type="ChEBI" id="CHEBI:597326"/>
    </ligand>
</feature>
<feature type="binding site" evidence="1">
    <location>
        <position position="197"/>
    </location>
    <ligand>
        <name>pyridoxal 5'-phosphate</name>
        <dbReference type="ChEBI" id="CHEBI:597326"/>
    </ligand>
</feature>
<feature type="binding site" evidence="1">
    <location>
        <begin position="239"/>
        <end position="240"/>
    </location>
    <ligand>
        <name>pyridoxal 5'-phosphate</name>
        <dbReference type="ChEBI" id="CHEBI:597326"/>
    </ligand>
</feature>
<feature type="modified residue" description="N6-(pyridoxal phosphate)lysine" evidence="1">
    <location>
        <position position="198"/>
    </location>
</feature>
<sequence length="362" mass="39840">MAQIFNFSSGPAMLPAEVLKQAQQELRDWNGLGTSVMEVSHRGKEFIQVAEEAEKDFRDLLNVPSNYKVLFCHGGGRGQFAAVPLNILGDKTTADYVDAGYWAASAIKEAKKYCTPNVFDAKVTVDGLRAVKPMREWQLSDNAAYMHYCPNETIDGIAIDETPDFGKDVVVAADFSSTILSRPIDVSRYGVIYAGAQKNIGPAGLTIVIVREDLLGKANIACPSILDYSILNDNGSMFNTPPTFAWYLSGLVFKWLKANGGVAEMDKINQQKAELLYGVIDNSDFYRNDVAKANRSRMNVPFQLADSALDKLFLEESFAAGLHALKGHRVVGGMRASIYNAMPLEGVKALTDFMVEFERRHG</sequence>
<reference key="1">
    <citation type="journal article" date="2002" name="Nucleic Acids Res.">
        <title>Genome sequence of Shigella flexneri 2a: insights into pathogenicity through comparison with genomes of Escherichia coli K12 and O157.</title>
        <authorList>
            <person name="Jin Q."/>
            <person name="Yuan Z."/>
            <person name="Xu J."/>
            <person name="Wang Y."/>
            <person name="Shen Y."/>
            <person name="Lu W."/>
            <person name="Wang J."/>
            <person name="Liu H."/>
            <person name="Yang J."/>
            <person name="Yang F."/>
            <person name="Zhang X."/>
            <person name="Zhang J."/>
            <person name="Yang G."/>
            <person name="Wu H."/>
            <person name="Qu D."/>
            <person name="Dong J."/>
            <person name="Sun L."/>
            <person name="Xue Y."/>
            <person name="Zhao A."/>
            <person name="Gao Y."/>
            <person name="Zhu J."/>
            <person name="Kan B."/>
            <person name="Ding K."/>
            <person name="Chen S."/>
            <person name="Cheng H."/>
            <person name="Yao Z."/>
            <person name="He B."/>
            <person name="Chen R."/>
            <person name="Ma D."/>
            <person name="Qiang B."/>
            <person name="Wen Y."/>
            <person name="Hou Y."/>
            <person name="Yu J."/>
        </authorList>
    </citation>
    <scope>NUCLEOTIDE SEQUENCE [LARGE SCALE GENOMIC DNA]</scope>
    <source>
        <strain>301 / Serotype 2a</strain>
    </source>
</reference>
<reference key="2">
    <citation type="journal article" date="2003" name="Infect. Immun.">
        <title>Complete genome sequence and comparative genomics of Shigella flexneri serotype 2a strain 2457T.</title>
        <authorList>
            <person name="Wei J."/>
            <person name="Goldberg M.B."/>
            <person name="Burland V."/>
            <person name="Venkatesan M.M."/>
            <person name="Deng W."/>
            <person name="Fournier G."/>
            <person name="Mayhew G.F."/>
            <person name="Plunkett G. III"/>
            <person name="Rose D.J."/>
            <person name="Darling A."/>
            <person name="Mau B."/>
            <person name="Perna N.T."/>
            <person name="Payne S.M."/>
            <person name="Runyen-Janecky L.J."/>
            <person name="Zhou S."/>
            <person name="Schwartz D.C."/>
            <person name="Blattner F.R."/>
        </authorList>
    </citation>
    <scope>NUCLEOTIDE SEQUENCE [LARGE SCALE GENOMIC DNA]</scope>
    <source>
        <strain>ATCC 700930 / 2457T / Serotype 2a</strain>
    </source>
</reference>
<name>SERC_SHIFL</name>
<proteinExistence type="inferred from homology"/>